<reference key="1">
    <citation type="journal article" date="1983" name="J. Mol. Biol.">
        <title>Complete nucleotide sequence of bacteriophage T7 DNA and the locations of T7 genetic elements.</title>
        <authorList>
            <person name="Dunn J.J."/>
            <person name="Studier F.W."/>
        </authorList>
    </citation>
    <scope>NUCLEOTIDE SEQUENCE [LARGE SCALE GENOMIC DNA]</scope>
</reference>
<reference key="2">
    <citation type="journal article" date="1981" name="J. Mol. Biol.">
        <title>Nucleotide sequence from the genetic left end of bacteriophage T7 DNA to the beginning of gene 4.</title>
        <authorList>
            <person name="Dunn J.J."/>
            <person name="Studier F.W."/>
        </authorList>
    </citation>
    <scope>NUCLEOTIDE SEQUENCE [GENOMIC DNA]</scope>
</reference>
<reference key="3">
    <citation type="journal article" date="2010" name="Mol. Microbiol.">
        <title>A novel nucleotide kinase encoded by gene 1.7 of bacteriophage T7.</title>
        <authorList>
            <person name="Tran N.Q."/>
            <person name="Lee S.J."/>
            <person name="Richardson C.C."/>
            <person name="Tabor S."/>
        </authorList>
    </citation>
    <scope>NUCLEOTIDE SEQUENCE [GENOMIC DNA]</scope>
    <scope>FUNCTION</scope>
    <scope>ISOFORM SMALL GP1.7</scope>
    <scope>SUBUNIT</scope>
    <scope>CATALYTIC ACTIVITY</scope>
</reference>
<reference key="4">
    <citation type="journal article" date="2008" name="Proc. Natl. Acad. Sci. U.S.A.">
        <title>Gene 1.7 of bacteriophage T7 confers sensitivity of phage growth to dideoxythymidine.</title>
        <authorList>
            <person name="Tran N.Q."/>
            <person name="Rezende L.F."/>
            <person name="Qimron U."/>
            <person name="Richardson C.C."/>
            <person name="Tabor S."/>
        </authorList>
    </citation>
    <scope>FUNCTION</scope>
</reference>
<reference key="5">
    <citation type="journal article" date="2020" name="Cell">
        <title>Bacterial Retrons Function In Anti-Phage Defense.</title>
        <authorList>
            <person name="Millman A."/>
            <person name="Bernheim A."/>
            <person name="Stokar-Avihail A."/>
            <person name="Fedorenko T."/>
            <person name="Voichek M."/>
            <person name="Leavitt A."/>
            <person name="Oppenheimer-Shaanan Y."/>
            <person name="Sorek R."/>
        </authorList>
    </citation>
    <scope>FUNCTION</scope>
    <scope>MUTAGENESIS OF TYR-128</scope>
</reference>
<organismHost>
    <name type="scientific">Escherichia coli</name>
    <dbReference type="NCBI Taxonomy" id="562"/>
</organismHost>
<evidence type="ECO:0000256" key="1">
    <source>
        <dbReference type="SAM" id="MobiDB-lite"/>
    </source>
</evidence>
<evidence type="ECO:0000269" key="2">
    <source>
    </source>
</evidence>
<evidence type="ECO:0000269" key="3">
    <source>
    </source>
</evidence>
<evidence type="ECO:0000305" key="4"/>
<evidence type="ECO:0000305" key="5">
    <source>
    </source>
</evidence>
<gene>
    <name type="ordered locus">1.7</name>
</gene>
<feature type="chain" id="PRO_0000106477" description="Nucleotide kinase gp1.7">
    <location>
        <begin position="1"/>
        <end position="196"/>
    </location>
</feature>
<feature type="region of interest" description="Disordered" evidence="1">
    <location>
        <begin position="97"/>
        <end position="118"/>
    </location>
</feature>
<feature type="splice variant" id="VSP_053707" description="In isoform Small gp1.7." evidence="4">
    <location>
        <begin position="1"/>
        <end position="41"/>
    </location>
</feature>
<feature type="mutagenesis site" description="Allows phage to overcome the retron Ec48 defense system; when associated with 'P-23' in the gp5.9 protein." evidence="3">
    <original>Y</original>
    <variation>C</variation>
    <location>
        <position position="128"/>
    </location>
</feature>
<proteinExistence type="evidence at protein level"/>
<accession>P03781</accession>
<accession>Q6WYR0</accession>
<sequence length="196" mass="22184">MGLLDGEAWEKENPPVQATGCIACLEKDDRYPHTCNKGANDMTEREQEMIIKLIDNNEGRPDDLNGCGILCSNVPCHLCPANNDQKITLGEIRAMDPRKPHLNKPEVTPTDDQPSAETIEGVTKPSHYMLFDDIEAIEVIARSMTVEQFKGYCFGNILKYRLRAGKKSELAYLEKDLAKADFYKELFEKHKDKCYA</sequence>
<comment type="function">
    <text evidence="2 3 5">Nucleotide kinase that catalyzes the phosphorylation of dGMP and dTMP to dGDP and dTDP (Probable) (PubMed:20497505). A double mutation in this protein and the RecBCD inhibitor gp5.9 protein allow phage to overcome the retron Ec48 bacteriophage defense system. This protein alone when overexpressed in E.coli does not cause growth arrest; Y128C may be a silent mutation (PubMed:33157039).</text>
</comment>
<comment type="catalytic activity">
    <reaction evidence="2">
        <text>dGMP + ATP = dGDP + ADP</text>
        <dbReference type="Rhea" id="RHEA:12697"/>
        <dbReference type="ChEBI" id="CHEBI:30616"/>
        <dbReference type="ChEBI" id="CHEBI:57673"/>
        <dbReference type="ChEBI" id="CHEBI:58595"/>
        <dbReference type="ChEBI" id="CHEBI:456216"/>
    </reaction>
    <physiologicalReaction direction="left-to-right" evidence="2">
        <dbReference type="Rhea" id="RHEA:12698"/>
    </physiologicalReaction>
</comment>
<comment type="catalytic activity">
    <reaction evidence="2">
        <text>dTMP + ATP = dTDP + ADP</text>
        <dbReference type="Rhea" id="RHEA:13517"/>
        <dbReference type="ChEBI" id="CHEBI:30616"/>
        <dbReference type="ChEBI" id="CHEBI:58369"/>
        <dbReference type="ChEBI" id="CHEBI:63528"/>
        <dbReference type="ChEBI" id="CHEBI:456216"/>
    </reaction>
    <physiologicalReaction direction="left-to-right" evidence="2">
        <dbReference type="Rhea" id="RHEA:13518"/>
    </physiologicalReaction>
</comment>
<comment type="subunit">
    <text evidence="2">Dodecamer.</text>
</comment>
<comment type="alternative products">
    <event type="alternative initiation"/>
    <isoform>
        <id>P03781-1</id>
        <name>Large gp1.7</name>
        <sequence type="displayed"/>
    </isoform>
    <isoform>
        <id>P03781-2</id>
        <name>Small gp1.7</name>
        <sequence type="described" ref="VSP_053707"/>
    </isoform>
</comment>
<comment type="miscellaneous">
    <molecule>Isoform Small gp1.7</molecule>
    <text evidence="4">Produced by alternative initiation at Met-42 of isoform Small gp1.7.</text>
</comment>
<keyword id="KW-0024">Alternative initiation</keyword>
<keyword id="KW-0945">Host-virus interaction</keyword>
<keyword id="KW-1090">Inhibition of host innate immune response by virus</keyword>
<keyword id="KW-0418">Kinase</keyword>
<keyword id="KW-0426">Late protein</keyword>
<keyword id="KW-1185">Reference proteome</keyword>
<keyword id="KW-0808">Transferase</keyword>
<keyword id="KW-0899">Viral immunoevasion</keyword>
<protein>
    <recommendedName>
        <fullName>Nucleotide kinase gp1.7</fullName>
    </recommendedName>
    <alternativeName>
        <fullName>Gene product 1.7</fullName>
        <shortName>Gp1.7</shortName>
        <ecNumber evidence="2">2.7.4.-</ecNumber>
    </alternativeName>
</protein>
<dbReference type="EC" id="2.7.4.-" evidence="2"/>
<dbReference type="EMBL" id="V01146">
    <property type="protein sequence ID" value="CAA24397.1"/>
    <property type="molecule type" value="Genomic_DNA"/>
</dbReference>
<dbReference type="EMBL" id="V01127">
    <property type="protein sequence ID" value="CAA24340.1"/>
    <property type="molecule type" value="Genomic_DNA"/>
</dbReference>
<dbReference type="EMBL" id="GU938867">
    <property type="protein sequence ID" value="ADE21719.1"/>
    <property type="molecule type" value="mRNA"/>
</dbReference>
<dbReference type="PIR" id="G43002">
    <property type="entry name" value="W1BP77"/>
</dbReference>
<dbReference type="RefSeq" id="NP_041967.1">
    <molecule id="P03781-1"/>
    <property type="nucleotide sequence ID" value="NC_001604.1"/>
</dbReference>
<dbReference type="MINT" id="P03781"/>
<dbReference type="KEGG" id="vg:1261060"/>
<dbReference type="OrthoDB" id="10863at10239"/>
<dbReference type="BioCyc" id="MetaCyc:MONOMER-19581"/>
<dbReference type="Proteomes" id="UP000000840">
    <property type="component" value="Genome"/>
</dbReference>
<dbReference type="GO" id="GO:0047507">
    <property type="term" value="F:deoxynucleoside-phosphate kinase activity, ATP as phosphate donor"/>
    <property type="evidence" value="ECO:0000314"/>
    <property type="project" value="UniProtKB"/>
</dbReference>
<dbReference type="GO" id="GO:0016301">
    <property type="term" value="F:kinase activity"/>
    <property type="evidence" value="ECO:0007669"/>
    <property type="project" value="UniProtKB-KW"/>
</dbReference>
<dbReference type="GO" id="GO:0052170">
    <property type="term" value="P:symbiont-mediated suppression of host innate immune response"/>
    <property type="evidence" value="ECO:0007669"/>
    <property type="project" value="UniProtKB-KW"/>
</dbReference>
<dbReference type="InterPro" id="IPR021739">
    <property type="entry name" value="SaV-like"/>
</dbReference>
<dbReference type="Pfam" id="PF11753">
    <property type="entry name" value="DUF3310"/>
    <property type="match status" value="1"/>
</dbReference>
<organism>
    <name type="scientific">Escherichia phage T7</name>
    <name type="common">Bacteriophage T7</name>
    <dbReference type="NCBI Taxonomy" id="10760"/>
    <lineage>
        <taxon>Viruses</taxon>
        <taxon>Duplodnaviria</taxon>
        <taxon>Heunggongvirae</taxon>
        <taxon>Uroviricota</taxon>
        <taxon>Caudoviricetes</taxon>
        <taxon>Autographiviridae</taxon>
        <taxon>Studiervirinae</taxon>
        <taxon>Teseptimavirus</taxon>
        <taxon>Teseptimavirus T7</taxon>
    </lineage>
</organism>
<name>NUCK_BPT7</name>